<reference key="1">
    <citation type="journal article" date="2008" name="BMC Genomics">
        <title>The missing link: Bordetella petrii is endowed with both the metabolic versatility of environmental bacteria and virulence traits of pathogenic Bordetellae.</title>
        <authorList>
            <person name="Gross R."/>
            <person name="Guzman C.A."/>
            <person name="Sebaihia M."/>
            <person name="Martin dos Santos V.A.P."/>
            <person name="Pieper D.H."/>
            <person name="Koebnik R."/>
            <person name="Lechner M."/>
            <person name="Bartels D."/>
            <person name="Buhrmester J."/>
            <person name="Choudhuri J.V."/>
            <person name="Ebensen T."/>
            <person name="Gaigalat L."/>
            <person name="Herrmann S."/>
            <person name="Khachane A.N."/>
            <person name="Larisch C."/>
            <person name="Link S."/>
            <person name="Linke B."/>
            <person name="Meyer F."/>
            <person name="Mormann S."/>
            <person name="Nakunst D."/>
            <person name="Rueckert C."/>
            <person name="Schneiker-Bekel S."/>
            <person name="Schulze K."/>
            <person name="Voerholter F.-J."/>
            <person name="Yevsa T."/>
            <person name="Engle J.T."/>
            <person name="Goldman W.E."/>
            <person name="Puehler A."/>
            <person name="Goebel U.B."/>
            <person name="Goesmann A."/>
            <person name="Bloecker H."/>
            <person name="Kaiser O."/>
            <person name="Martinez-Arias R."/>
        </authorList>
    </citation>
    <scope>NUCLEOTIDE SEQUENCE [LARGE SCALE GENOMIC DNA]</scope>
    <source>
        <strain>ATCC BAA-461 / DSM 12804 / CCUG 43448</strain>
    </source>
</reference>
<accession>A9I602</accession>
<gene>
    <name evidence="1" type="primary">purM</name>
    <name type="ordered locus">Bpet0825</name>
</gene>
<name>PUR5_BORPD</name>
<protein>
    <recommendedName>
        <fullName evidence="1">Phosphoribosylformylglycinamidine cyclo-ligase</fullName>
        <ecNumber evidence="1">6.3.3.1</ecNumber>
    </recommendedName>
    <alternativeName>
        <fullName evidence="1">AIR synthase</fullName>
    </alternativeName>
    <alternativeName>
        <fullName evidence="1">AIRS</fullName>
    </alternativeName>
    <alternativeName>
        <fullName evidence="1">Phosphoribosyl-aminoimidazole synthetase</fullName>
    </alternativeName>
</protein>
<evidence type="ECO:0000255" key="1">
    <source>
        <dbReference type="HAMAP-Rule" id="MF_00741"/>
    </source>
</evidence>
<comment type="catalytic activity">
    <reaction evidence="1">
        <text>2-formamido-N(1)-(5-O-phospho-beta-D-ribosyl)acetamidine + ATP = 5-amino-1-(5-phospho-beta-D-ribosyl)imidazole + ADP + phosphate + H(+)</text>
        <dbReference type="Rhea" id="RHEA:23032"/>
        <dbReference type="ChEBI" id="CHEBI:15378"/>
        <dbReference type="ChEBI" id="CHEBI:30616"/>
        <dbReference type="ChEBI" id="CHEBI:43474"/>
        <dbReference type="ChEBI" id="CHEBI:137981"/>
        <dbReference type="ChEBI" id="CHEBI:147287"/>
        <dbReference type="ChEBI" id="CHEBI:456216"/>
        <dbReference type="EC" id="6.3.3.1"/>
    </reaction>
</comment>
<comment type="pathway">
    <text evidence="1">Purine metabolism; IMP biosynthesis via de novo pathway; 5-amino-1-(5-phospho-D-ribosyl)imidazole from N(2)-formyl-N(1)-(5-phospho-D-ribosyl)glycinamide: step 2/2.</text>
</comment>
<comment type="subcellular location">
    <subcellularLocation>
        <location evidence="1">Cytoplasm</location>
    </subcellularLocation>
</comment>
<comment type="similarity">
    <text evidence="1">Belongs to the AIR synthase family.</text>
</comment>
<organism>
    <name type="scientific">Bordetella petrii (strain ATCC BAA-461 / DSM 12804 / CCUG 43448)</name>
    <dbReference type="NCBI Taxonomy" id="340100"/>
    <lineage>
        <taxon>Bacteria</taxon>
        <taxon>Pseudomonadati</taxon>
        <taxon>Pseudomonadota</taxon>
        <taxon>Betaproteobacteria</taxon>
        <taxon>Burkholderiales</taxon>
        <taxon>Alcaligenaceae</taxon>
        <taxon>Bordetella</taxon>
    </lineage>
</organism>
<sequence>MTTQPSAPLTYRDAGVDIDAGDALVDRIKPLAARTMRPGVLAGIGGFGALFQVPGKYREPVLVSGTDGVGTKLRLAFEWNRHDTVGVDLVAMSVNDILVQGAEPLFFLDYFACGKLSVDTAAAVVGGIARGCELAGCALIGGETAEMPGMYPDGEYDLAGFAVGAVEKSAILDGKSIQPGDVVLGLASSGAHSNGYSLVRKILDRAGARPDQDFHGQPLADVVMAPTRIYVKQVLAALAAHTGGIKGLAHITGGGLLDNVPRILQPGLSARLHRDAWQMPQLFQWLQQQGGVADTEMHRVFNCGIGMVIVVDAAQADAVAATLAAQGETVSRIGEIVAQKDGEAQTVVV</sequence>
<keyword id="KW-0067">ATP-binding</keyword>
<keyword id="KW-0963">Cytoplasm</keyword>
<keyword id="KW-0436">Ligase</keyword>
<keyword id="KW-0547">Nucleotide-binding</keyword>
<keyword id="KW-0658">Purine biosynthesis</keyword>
<proteinExistence type="inferred from homology"/>
<dbReference type="EC" id="6.3.3.1" evidence="1"/>
<dbReference type="EMBL" id="AM902716">
    <property type="protein sequence ID" value="CAP41157.1"/>
    <property type="molecule type" value="Genomic_DNA"/>
</dbReference>
<dbReference type="SMR" id="A9I602"/>
<dbReference type="STRING" id="94624.Bpet0825"/>
<dbReference type="KEGG" id="bpt:Bpet0825"/>
<dbReference type="eggNOG" id="COG0150">
    <property type="taxonomic scope" value="Bacteria"/>
</dbReference>
<dbReference type="UniPathway" id="UPA00074">
    <property type="reaction ID" value="UER00129"/>
</dbReference>
<dbReference type="Proteomes" id="UP000001225">
    <property type="component" value="Chromosome"/>
</dbReference>
<dbReference type="GO" id="GO:0005829">
    <property type="term" value="C:cytosol"/>
    <property type="evidence" value="ECO:0007669"/>
    <property type="project" value="TreeGrafter"/>
</dbReference>
<dbReference type="GO" id="GO:0005524">
    <property type="term" value="F:ATP binding"/>
    <property type="evidence" value="ECO:0007669"/>
    <property type="project" value="UniProtKB-KW"/>
</dbReference>
<dbReference type="GO" id="GO:0004637">
    <property type="term" value="F:phosphoribosylamine-glycine ligase activity"/>
    <property type="evidence" value="ECO:0007669"/>
    <property type="project" value="TreeGrafter"/>
</dbReference>
<dbReference type="GO" id="GO:0004641">
    <property type="term" value="F:phosphoribosylformylglycinamidine cyclo-ligase activity"/>
    <property type="evidence" value="ECO:0007669"/>
    <property type="project" value="UniProtKB-UniRule"/>
</dbReference>
<dbReference type="GO" id="GO:0006189">
    <property type="term" value="P:'de novo' IMP biosynthetic process"/>
    <property type="evidence" value="ECO:0007669"/>
    <property type="project" value="UniProtKB-UniRule"/>
</dbReference>
<dbReference type="GO" id="GO:0046084">
    <property type="term" value="P:adenine biosynthetic process"/>
    <property type="evidence" value="ECO:0007669"/>
    <property type="project" value="TreeGrafter"/>
</dbReference>
<dbReference type="CDD" id="cd02196">
    <property type="entry name" value="PurM"/>
    <property type="match status" value="1"/>
</dbReference>
<dbReference type="FunFam" id="3.30.1330.10:FF:000001">
    <property type="entry name" value="Phosphoribosylformylglycinamidine cyclo-ligase"/>
    <property type="match status" value="1"/>
</dbReference>
<dbReference type="FunFam" id="3.90.650.10:FF:000001">
    <property type="entry name" value="Phosphoribosylformylglycinamidine cyclo-ligase"/>
    <property type="match status" value="1"/>
</dbReference>
<dbReference type="Gene3D" id="3.90.650.10">
    <property type="entry name" value="PurM-like C-terminal domain"/>
    <property type="match status" value="1"/>
</dbReference>
<dbReference type="Gene3D" id="3.30.1330.10">
    <property type="entry name" value="PurM-like, N-terminal domain"/>
    <property type="match status" value="1"/>
</dbReference>
<dbReference type="HAMAP" id="MF_00741">
    <property type="entry name" value="AIRS"/>
    <property type="match status" value="1"/>
</dbReference>
<dbReference type="InterPro" id="IPR010918">
    <property type="entry name" value="PurM-like_C_dom"/>
</dbReference>
<dbReference type="InterPro" id="IPR036676">
    <property type="entry name" value="PurM-like_C_sf"/>
</dbReference>
<dbReference type="InterPro" id="IPR016188">
    <property type="entry name" value="PurM-like_N"/>
</dbReference>
<dbReference type="InterPro" id="IPR036921">
    <property type="entry name" value="PurM-like_N_sf"/>
</dbReference>
<dbReference type="InterPro" id="IPR004733">
    <property type="entry name" value="PurM_cligase"/>
</dbReference>
<dbReference type="NCBIfam" id="TIGR00878">
    <property type="entry name" value="purM"/>
    <property type="match status" value="1"/>
</dbReference>
<dbReference type="PANTHER" id="PTHR10520:SF12">
    <property type="entry name" value="TRIFUNCTIONAL PURINE BIOSYNTHETIC PROTEIN ADENOSINE-3"/>
    <property type="match status" value="1"/>
</dbReference>
<dbReference type="PANTHER" id="PTHR10520">
    <property type="entry name" value="TRIFUNCTIONAL PURINE BIOSYNTHETIC PROTEIN ADENOSINE-3-RELATED"/>
    <property type="match status" value="1"/>
</dbReference>
<dbReference type="Pfam" id="PF00586">
    <property type="entry name" value="AIRS"/>
    <property type="match status" value="1"/>
</dbReference>
<dbReference type="Pfam" id="PF02769">
    <property type="entry name" value="AIRS_C"/>
    <property type="match status" value="1"/>
</dbReference>
<dbReference type="SUPFAM" id="SSF56042">
    <property type="entry name" value="PurM C-terminal domain-like"/>
    <property type="match status" value="1"/>
</dbReference>
<dbReference type="SUPFAM" id="SSF55326">
    <property type="entry name" value="PurM N-terminal domain-like"/>
    <property type="match status" value="1"/>
</dbReference>
<feature type="chain" id="PRO_1000192999" description="Phosphoribosylformylglycinamidine cyclo-ligase">
    <location>
        <begin position="1"/>
        <end position="349"/>
    </location>
</feature>